<comment type="function">
    <text evidence="1">Nucleotide-binding protein.</text>
</comment>
<comment type="similarity">
    <text evidence="1">Belongs to the YajQ family.</text>
</comment>
<keyword id="KW-0547">Nucleotide-binding</keyword>
<organism>
    <name type="scientific">Mycobacterium bovis (strain BCG / Tokyo 172 / ATCC 35737 / TMC 1019)</name>
    <dbReference type="NCBI Taxonomy" id="561275"/>
    <lineage>
        <taxon>Bacteria</taxon>
        <taxon>Bacillati</taxon>
        <taxon>Actinomycetota</taxon>
        <taxon>Actinomycetes</taxon>
        <taxon>Mycobacteriales</taxon>
        <taxon>Mycobacteriaceae</taxon>
        <taxon>Mycobacterium</taxon>
        <taxon>Mycobacterium tuberculosis complex</taxon>
    </lineage>
</organism>
<sequence length="163" mass="18078">MADSSFDIVSKVDRQEVDNALNQAAKELATRFDFRGTDTKIAWKGDEAVELTSSTEERVKAAVDVFKEKLIRRDISLKAFEAGEPQASGKTYKVTGALKQGISSENAKKITKLIRDAGPKNVKTQIQGDEVRVTSKKRDDLQAVIAMLKKADLDVALQFVNYR</sequence>
<accession>C1AKP6</accession>
<feature type="chain" id="PRO_1000147309" description="Nucleotide-binding protein JTY_0581">
    <location>
        <begin position="1"/>
        <end position="163"/>
    </location>
</feature>
<gene>
    <name type="ordered locus">JTY_0581</name>
</gene>
<protein>
    <recommendedName>
        <fullName evidence="1">Nucleotide-binding protein JTY_0581</fullName>
    </recommendedName>
</protein>
<reference key="1">
    <citation type="journal article" date="2009" name="Vaccine">
        <title>Whole genome sequence analysis of Mycobacterium bovis bacillus Calmette-Guerin (BCG) Tokyo 172: a comparative study of BCG vaccine substrains.</title>
        <authorList>
            <person name="Seki M."/>
            <person name="Honda I."/>
            <person name="Fujita I."/>
            <person name="Yano I."/>
            <person name="Yamamoto S."/>
            <person name="Koyama A."/>
        </authorList>
    </citation>
    <scope>NUCLEOTIDE SEQUENCE [LARGE SCALE GENOMIC DNA]</scope>
    <source>
        <strain>BCG / Tokyo 172 / ATCC 35737 / TMC 1019</strain>
    </source>
</reference>
<proteinExistence type="inferred from homology"/>
<dbReference type="EMBL" id="AP010918">
    <property type="protein sequence ID" value="BAH24875.1"/>
    <property type="molecule type" value="Genomic_DNA"/>
</dbReference>
<dbReference type="RefSeq" id="WP_003402987.1">
    <property type="nucleotide sequence ID" value="NZ_CP014566.1"/>
</dbReference>
<dbReference type="SMR" id="C1AKP6"/>
<dbReference type="KEGG" id="mbt:JTY_0581"/>
<dbReference type="HOGENOM" id="CLU_099839_0_0_11"/>
<dbReference type="GO" id="GO:0005829">
    <property type="term" value="C:cytosol"/>
    <property type="evidence" value="ECO:0007669"/>
    <property type="project" value="TreeGrafter"/>
</dbReference>
<dbReference type="GO" id="GO:0000166">
    <property type="term" value="F:nucleotide binding"/>
    <property type="evidence" value="ECO:0007669"/>
    <property type="project" value="TreeGrafter"/>
</dbReference>
<dbReference type="CDD" id="cd11740">
    <property type="entry name" value="YajQ_like"/>
    <property type="match status" value="1"/>
</dbReference>
<dbReference type="FunFam" id="3.30.70.860:FF:000004">
    <property type="entry name" value="UPF0234 protein AWC22_11905"/>
    <property type="match status" value="1"/>
</dbReference>
<dbReference type="FunFam" id="3.30.70.990:FF:000003">
    <property type="entry name" value="UPF0234 protein MIP_06774"/>
    <property type="match status" value="1"/>
</dbReference>
<dbReference type="Gene3D" id="3.30.70.860">
    <property type="match status" value="1"/>
</dbReference>
<dbReference type="Gene3D" id="3.30.70.990">
    <property type="entry name" value="YajQ-like, domain 2"/>
    <property type="match status" value="1"/>
</dbReference>
<dbReference type="HAMAP" id="MF_00632">
    <property type="entry name" value="YajQ"/>
    <property type="match status" value="1"/>
</dbReference>
<dbReference type="InterPro" id="IPR007551">
    <property type="entry name" value="DUF520"/>
</dbReference>
<dbReference type="InterPro" id="IPR035571">
    <property type="entry name" value="UPF0234-like_C"/>
</dbReference>
<dbReference type="InterPro" id="IPR035570">
    <property type="entry name" value="UPF0234_N"/>
</dbReference>
<dbReference type="InterPro" id="IPR036183">
    <property type="entry name" value="YajQ-like_sf"/>
</dbReference>
<dbReference type="NCBIfam" id="NF003819">
    <property type="entry name" value="PRK05412.1"/>
    <property type="match status" value="1"/>
</dbReference>
<dbReference type="PANTHER" id="PTHR30476">
    <property type="entry name" value="UPF0234 PROTEIN YAJQ"/>
    <property type="match status" value="1"/>
</dbReference>
<dbReference type="PANTHER" id="PTHR30476:SF0">
    <property type="entry name" value="UPF0234 PROTEIN YAJQ"/>
    <property type="match status" value="1"/>
</dbReference>
<dbReference type="Pfam" id="PF04461">
    <property type="entry name" value="DUF520"/>
    <property type="match status" value="1"/>
</dbReference>
<dbReference type="SUPFAM" id="SSF89963">
    <property type="entry name" value="YajQ-like"/>
    <property type="match status" value="2"/>
</dbReference>
<evidence type="ECO:0000255" key="1">
    <source>
        <dbReference type="HAMAP-Rule" id="MF_00632"/>
    </source>
</evidence>
<name>Y581_MYCBT</name>